<comment type="function">
    <text evidence="1">Plays an important role in the de novo pathway of purine nucleotide biosynthesis. Catalyzes the first committed step in the biosynthesis of AMP from IMP.</text>
</comment>
<comment type="catalytic activity">
    <reaction evidence="1">
        <text>IMP + L-aspartate + GTP = N(6)-(1,2-dicarboxyethyl)-AMP + GDP + phosphate + 2 H(+)</text>
        <dbReference type="Rhea" id="RHEA:15753"/>
        <dbReference type="ChEBI" id="CHEBI:15378"/>
        <dbReference type="ChEBI" id="CHEBI:29991"/>
        <dbReference type="ChEBI" id="CHEBI:37565"/>
        <dbReference type="ChEBI" id="CHEBI:43474"/>
        <dbReference type="ChEBI" id="CHEBI:57567"/>
        <dbReference type="ChEBI" id="CHEBI:58053"/>
        <dbReference type="ChEBI" id="CHEBI:58189"/>
        <dbReference type="EC" id="6.3.4.4"/>
    </reaction>
</comment>
<comment type="cofactor">
    <cofactor evidence="1">
        <name>Mg(2+)</name>
        <dbReference type="ChEBI" id="CHEBI:18420"/>
    </cofactor>
    <text evidence="1">Binds 1 Mg(2+) ion per subunit.</text>
</comment>
<comment type="pathway">
    <text evidence="1">Purine metabolism; AMP biosynthesis via de novo pathway; AMP from IMP: step 1/2.</text>
</comment>
<comment type="subunit">
    <text evidence="1">Homodimer.</text>
</comment>
<comment type="subcellular location">
    <subcellularLocation>
        <location evidence="1">Cytoplasm</location>
    </subcellularLocation>
</comment>
<comment type="similarity">
    <text evidence="1">Belongs to the adenylosuccinate synthetase family.</text>
</comment>
<organism>
    <name type="scientific">Pseudomonas syringae pv. syringae (strain B728a)</name>
    <dbReference type="NCBI Taxonomy" id="205918"/>
    <lineage>
        <taxon>Bacteria</taxon>
        <taxon>Pseudomonadati</taxon>
        <taxon>Pseudomonadota</taxon>
        <taxon>Gammaproteobacteria</taxon>
        <taxon>Pseudomonadales</taxon>
        <taxon>Pseudomonadaceae</taxon>
        <taxon>Pseudomonas</taxon>
        <taxon>Pseudomonas syringae</taxon>
    </lineage>
</organism>
<gene>
    <name evidence="1" type="primary">purA</name>
    <name type="ordered locus">Psyr_0577</name>
</gene>
<sequence length="430" mass="46975">MGKNVVVLGTQWGDEGKGKIVDLLTEHATAVVRYQGGHNAGHTLVIDGEKTVLHLIPSGVLREGVQCLIGNGVVVAPDALLREIVKLEEKGIPVRERLRISPSCPLILSYHVALDQAREKARGEFKIGTTGRGIGPAYEDKVARRGLRIGDLFHRERFAAKLGELLDYHNFVLVNYYKEPAIDFQKTLDECMEYADMLKPLMLDVTAALHEMRRDGKDIMFEGAQGSLLDIDHGTYPYVTSSNTTAGGIATGSGFGPMYLDYILGITKAYTTRVGSGPFPTELFDDVGAFLAKRGHEFGATTGRARRCGWFDAVILRRAIEINSISGLCLTKLDVLDGLETINICVGYENEEGAVIDAPTDADSYLGLRPVYEQMPGWSESTLGAKTLEELPAAARAYIKRVEELVGAPIDIISTGPDRNETIVLRHPFG</sequence>
<keyword id="KW-0963">Cytoplasm</keyword>
<keyword id="KW-0342">GTP-binding</keyword>
<keyword id="KW-0436">Ligase</keyword>
<keyword id="KW-0460">Magnesium</keyword>
<keyword id="KW-0479">Metal-binding</keyword>
<keyword id="KW-0547">Nucleotide-binding</keyword>
<keyword id="KW-0658">Purine biosynthesis</keyword>
<proteinExistence type="inferred from homology"/>
<accession>Q4ZYX5</accession>
<dbReference type="EC" id="6.3.4.4" evidence="1"/>
<dbReference type="EMBL" id="CP000075">
    <property type="protein sequence ID" value="AAY35647.1"/>
    <property type="molecule type" value="Genomic_DNA"/>
</dbReference>
<dbReference type="RefSeq" id="WP_003366319.1">
    <property type="nucleotide sequence ID" value="NC_007005.1"/>
</dbReference>
<dbReference type="RefSeq" id="YP_233685.1">
    <property type="nucleotide sequence ID" value="NC_007005.1"/>
</dbReference>
<dbReference type="SMR" id="Q4ZYX5"/>
<dbReference type="STRING" id="205918.Psyr_0577"/>
<dbReference type="KEGG" id="psb:Psyr_0577"/>
<dbReference type="PATRIC" id="fig|205918.7.peg.600"/>
<dbReference type="eggNOG" id="COG0104">
    <property type="taxonomic scope" value="Bacteria"/>
</dbReference>
<dbReference type="HOGENOM" id="CLU_029848_0_0_6"/>
<dbReference type="OrthoDB" id="9807553at2"/>
<dbReference type="UniPathway" id="UPA00075">
    <property type="reaction ID" value="UER00335"/>
</dbReference>
<dbReference type="Proteomes" id="UP000000426">
    <property type="component" value="Chromosome"/>
</dbReference>
<dbReference type="GO" id="GO:0005737">
    <property type="term" value="C:cytoplasm"/>
    <property type="evidence" value="ECO:0007669"/>
    <property type="project" value="UniProtKB-SubCell"/>
</dbReference>
<dbReference type="GO" id="GO:0004019">
    <property type="term" value="F:adenylosuccinate synthase activity"/>
    <property type="evidence" value="ECO:0007669"/>
    <property type="project" value="UniProtKB-UniRule"/>
</dbReference>
<dbReference type="GO" id="GO:0005525">
    <property type="term" value="F:GTP binding"/>
    <property type="evidence" value="ECO:0007669"/>
    <property type="project" value="UniProtKB-UniRule"/>
</dbReference>
<dbReference type="GO" id="GO:0000287">
    <property type="term" value="F:magnesium ion binding"/>
    <property type="evidence" value="ECO:0007669"/>
    <property type="project" value="UniProtKB-UniRule"/>
</dbReference>
<dbReference type="GO" id="GO:0044208">
    <property type="term" value="P:'de novo' AMP biosynthetic process"/>
    <property type="evidence" value="ECO:0007669"/>
    <property type="project" value="UniProtKB-UniRule"/>
</dbReference>
<dbReference type="GO" id="GO:0046040">
    <property type="term" value="P:IMP metabolic process"/>
    <property type="evidence" value="ECO:0007669"/>
    <property type="project" value="TreeGrafter"/>
</dbReference>
<dbReference type="CDD" id="cd03108">
    <property type="entry name" value="AdSS"/>
    <property type="match status" value="1"/>
</dbReference>
<dbReference type="FunFam" id="1.10.300.10:FF:000001">
    <property type="entry name" value="Adenylosuccinate synthetase"/>
    <property type="match status" value="1"/>
</dbReference>
<dbReference type="FunFam" id="3.90.170.10:FF:000001">
    <property type="entry name" value="Adenylosuccinate synthetase"/>
    <property type="match status" value="1"/>
</dbReference>
<dbReference type="Gene3D" id="3.40.440.10">
    <property type="entry name" value="Adenylosuccinate Synthetase, subunit A, domain 1"/>
    <property type="match status" value="1"/>
</dbReference>
<dbReference type="Gene3D" id="1.10.300.10">
    <property type="entry name" value="Adenylosuccinate Synthetase, subunit A, domain 2"/>
    <property type="match status" value="1"/>
</dbReference>
<dbReference type="Gene3D" id="3.90.170.10">
    <property type="entry name" value="Adenylosuccinate Synthetase, subunit A, domain 3"/>
    <property type="match status" value="1"/>
</dbReference>
<dbReference type="HAMAP" id="MF_00011">
    <property type="entry name" value="Adenylosucc_synth"/>
    <property type="match status" value="1"/>
</dbReference>
<dbReference type="InterPro" id="IPR018220">
    <property type="entry name" value="Adenylosuccin_syn_GTP-bd"/>
</dbReference>
<dbReference type="InterPro" id="IPR033128">
    <property type="entry name" value="Adenylosuccin_syn_Lys_AS"/>
</dbReference>
<dbReference type="InterPro" id="IPR042109">
    <property type="entry name" value="Adenylosuccinate_synth_dom1"/>
</dbReference>
<dbReference type="InterPro" id="IPR042110">
    <property type="entry name" value="Adenylosuccinate_synth_dom2"/>
</dbReference>
<dbReference type="InterPro" id="IPR042111">
    <property type="entry name" value="Adenylosuccinate_synth_dom3"/>
</dbReference>
<dbReference type="InterPro" id="IPR001114">
    <property type="entry name" value="Adenylosuccinate_synthetase"/>
</dbReference>
<dbReference type="InterPro" id="IPR027417">
    <property type="entry name" value="P-loop_NTPase"/>
</dbReference>
<dbReference type="NCBIfam" id="NF002223">
    <property type="entry name" value="PRK01117.1"/>
    <property type="match status" value="1"/>
</dbReference>
<dbReference type="NCBIfam" id="TIGR00184">
    <property type="entry name" value="purA"/>
    <property type="match status" value="1"/>
</dbReference>
<dbReference type="PANTHER" id="PTHR11846">
    <property type="entry name" value="ADENYLOSUCCINATE SYNTHETASE"/>
    <property type="match status" value="1"/>
</dbReference>
<dbReference type="PANTHER" id="PTHR11846:SF0">
    <property type="entry name" value="ADENYLOSUCCINATE SYNTHETASE"/>
    <property type="match status" value="1"/>
</dbReference>
<dbReference type="Pfam" id="PF00709">
    <property type="entry name" value="Adenylsucc_synt"/>
    <property type="match status" value="1"/>
</dbReference>
<dbReference type="SMART" id="SM00788">
    <property type="entry name" value="Adenylsucc_synt"/>
    <property type="match status" value="1"/>
</dbReference>
<dbReference type="SUPFAM" id="SSF52540">
    <property type="entry name" value="P-loop containing nucleoside triphosphate hydrolases"/>
    <property type="match status" value="1"/>
</dbReference>
<dbReference type="PROSITE" id="PS01266">
    <property type="entry name" value="ADENYLOSUCCIN_SYN_1"/>
    <property type="match status" value="1"/>
</dbReference>
<dbReference type="PROSITE" id="PS00513">
    <property type="entry name" value="ADENYLOSUCCIN_SYN_2"/>
    <property type="match status" value="1"/>
</dbReference>
<protein>
    <recommendedName>
        <fullName evidence="1">Adenylosuccinate synthetase</fullName>
        <shortName evidence="1">AMPSase</shortName>
        <shortName evidence="1">AdSS</shortName>
        <ecNumber evidence="1">6.3.4.4</ecNumber>
    </recommendedName>
    <alternativeName>
        <fullName evidence="1">IMP--aspartate ligase</fullName>
    </alternativeName>
</protein>
<name>PURA_PSEU2</name>
<feature type="chain" id="PRO_0000224310" description="Adenylosuccinate synthetase">
    <location>
        <begin position="1"/>
        <end position="430"/>
    </location>
</feature>
<feature type="active site" description="Proton acceptor" evidence="1">
    <location>
        <position position="14"/>
    </location>
</feature>
<feature type="active site" description="Proton donor" evidence="1">
    <location>
        <position position="42"/>
    </location>
</feature>
<feature type="binding site" evidence="1">
    <location>
        <begin position="13"/>
        <end position="19"/>
    </location>
    <ligand>
        <name>GTP</name>
        <dbReference type="ChEBI" id="CHEBI:37565"/>
    </ligand>
</feature>
<feature type="binding site" description="in other chain" evidence="1">
    <location>
        <begin position="14"/>
        <end position="17"/>
    </location>
    <ligand>
        <name>IMP</name>
        <dbReference type="ChEBI" id="CHEBI:58053"/>
        <note>ligand shared between dimeric partners</note>
    </ligand>
</feature>
<feature type="binding site" evidence="1">
    <location>
        <position position="14"/>
    </location>
    <ligand>
        <name>Mg(2+)</name>
        <dbReference type="ChEBI" id="CHEBI:18420"/>
    </ligand>
</feature>
<feature type="binding site" description="in other chain" evidence="1">
    <location>
        <begin position="39"/>
        <end position="42"/>
    </location>
    <ligand>
        <name>IMP</name>
        <dbReference type="ChEBI" id="CHEBI:58053"/>
        <note>ligand shared between dimeric partners</note>
    </ligand>
</feature>
<feature type="binding site" evidence="1">
    <location>
        <begin position="41"/>
        <end position="43"/>
    </location>
    <ligand>
        <name>GTP</name>
        <dbReference type="ChEBI" id="CHEBI:37565"/>
    </ligand>
</feature>
<feature type="binding site" evidence="1">
    <location>
        <position position="41"/>
    </location>
    <ligand>
        <name>Mg(2+)</name>
        <dbReference type="ChEBI" id="CHEBI:18420"/>
    </ligand>
</feature>
<feature type="binding site" description="in other chain" evidence="1">
    <location>
        <position position="130"/>
    </location>
    <ligand>
        <name>IMP</name>
        <dbReference type="ChEBI" id="CHEBI:58053"/>
        <note>ligand shared between dimeric partners</note>
    </ligand>
</feature>
<feature type="binding site" evidence="1">
    <location>
        <position position="144"/>
    </location>
    <ligand>
        <name>IMP</name>
        <dbReference type="ChEBI" id="CHEBI:58053"/>
        <note>ligand shared between dimeric partners</note>
    </ligand>
</feature>
<feature type="binding site" description="in other chain" evidence="1">
    <location>
        <position position="225"/>
    </location>
    <ligand>
        <name>IMP</name>
        <dbReference type="ChEBI" id="CHEBI:58053"/>
        <note>ligand shared between dimeric partners</note>
    </ligand>
</feature>
<feature type="binding site" description="in other chain" evidence="1">
    <location>
        <position position="240"/>
    </location>
    <ligand>
        <name>IMP</name>
        <dbReference type="ChEBI" id="CHEBI:58053"/>
        <note>ligand shared between dimeric partners</note>
    </ligand>
</feature>
<feature type="binding site" evidence="1">
    <location>
        <begin position="300"/>
        <end position="306"/>
    </location>
    <ligand>
        <name>substrate</name>
    </ligand>
</feature>
<feature type="binding site" description="in other chain" evidence="1">
    <location>
        <position position="304"/>
    </location>
    <ligand>
        <name>IMP</name>
        <dbReference type="ChEBI" id="CHEBI:58053"/>
        <note>ligand shared between dimeric partners</note>
    </ligand>
</feature>
<feature type="binding site" evidence="1">
    <location>
        <position position="306"/>
    </location>
    <ligand>
        <name>GTP</name>
        <dbReference type="ChEBI" id="CHEBI:37565"/>
    </ligand>
</feature>
<feature type="binding site" evidence="1">
    <location>
        <begin position="332"/>
        <end position="334"/>
    </location>
    <ligand>
        <name>GTP</name>
        <dbReference type="ChEBI" id="CHEBI:37565"/>
    </ligand>
</feature>
<feature type="binding site" evidence="1">
    <location>
        <begin position="414"/>
        <end position="416"/>
    </location>
    <ligand>
        <name>GTP</name>
        <dbReference type="ChEBI" id="CHEBI:37565"/>
    </ligand>
</feature>
<evidence type="ECO:0000255" key="1">
    <source>
        <dbReference type="HAMAP-Rule" id="MF_00011"/>
    </source>
</evidence>
<reference key="1">
    <citation type="journal article" date="2005" name="Proc. Natl. Acad. Sci. U.S.A.">
        <title>Comparison of the complete genome sequences of Pseudomonas syringae pv. syringae B728a and pv. tomato DC3000.</title>
        <authorList>
            <person name="Feil H."/>
            <person name="Feil W.S."/>
            <person name="Chain P."/>
            <person name="Larimer F."/>
            <person name="Dibartolo G."/>
            <person name="Copeland A."/>
            <person name="Lykidis A."/>
            <person name="Trong S."/>
            <person name="Nolan M."/>
            <person name="Goltsman E."/>
            <person name="Thiel J."/>
            <person name="Malfatti S."/>
            <person name="Loper J.E."/>
            <person name="Lapidus A."/>
            <person name="Detter J.C."/>
            <person name="Land M."/>
            <person name="Richardson P.M."/>
            <person name="Kyrpides N.C."/>
            <person name="Ivanova N."/>
            <person name="Lindow S.E."/>
        </authorList>
    </citation>
    <scope>NUCLEOTIDE SEQUENCE [LARGE SCALE GENOMIC DNA]</scope>
    <source>
        <strain>B728a</strain>
    </source>
</reference>